<comment type="similarity">
    <text evidence="2">To H.influenzae HI_1631.</text>
</comment>
<gene>
    <name type="ordered locus">NGR_a00210</name>
    <name type="ORF">y4bI</name>
</gene>
<feature type="signal peptide" evidence="1">
    <location>
        <begin position="1"/>
        <end position="37"/>
    </location>
</feature>
<feature type="chain" id="PRO_0000014160" description="Uncharacterized protein y4bI">
    <location>
        <begin position="38"/>
        <end position="138"/>
    </location>
</feature>
<organism>
    <name type="scientific">Sinorhizobium fredii (strain NBRC 101917 / NGR234)</name>
    <dbReference type="NCBI Taxonomy" id="394"/>
    <lineage>
        <taxon>Bacteria</taxon>
        <taxon>Pseudomonadati</taxon>
        <taxon>Pseudomonadota</taxon>
        <taxon>Alphaproteobacteria</taxon>
        <taxon>Hyphomicrobiales</taxon>
        <taxon>Rhizobiaceae</taxon>
        <taxon>Sinorhizobium/Ensifer group</taxon>
        <taxon>Sinorhizobium</taxon>
    </lineage>
</organism>
<accession>P55376</accession>
<proteinExistence type="inferred from homology"/>
<keyword id="KW-0614">Plasmid</keyword>
<keyword id="KW-1185">Reference proteome</keyword>
<keyword id="KW-0732">Signal</keyword>
<evidence type="ECO:0000255" key="1"/>
<evidence type="ECO:0000305" key="2"/>
<reference key="1">
    <citation type="journal article" date="1997" name="Nature">
        <title>Molecular basis of symbiosis between Rhizobium and legumes.</title>
        <authorList>
            <person name="Freiberg C.A."/>
            <person name="Fellay R."/>
            <person name="Bairoch A."/>
            <person name="Broughton W.J."/>
            <person name="Rosenthal A."/>
            <person name="Perret X."/>
        </authorList>
    </citation>
    <scope>NUCLEOTIDE SEQUENCE [LARGE SCALE GENOMIC DNA]</scope>
    <source>
        <strain>NBRC 101917 / NGR234</strain>
    </source>
</reference>
<reference key="2">
    <citation type="journal article" date="2009" name="Appl. Environ. Microbiol.">
        <title>Rhizobium sp. strain NGR234 possesses a remarkable number of secretion systems.</title>
        <authorList>
            <person name="Schmeisser C."/>
            <person name="Liesegang H."/>
            <person name="Krysciak D."/>
            <person name="Bakkou N."/>
            <person name="Le Quere A."/>
            <person name="Wollherr A."/>
            <person name="Heinemeyer I."/>
            <person name="Morgenstern B."/>
            <person name="Pommerening-Roeser A."/>
            <person name="Flores M."/>
            <person name="Palacios R."/>
            <person name="Brenner S."/>
            <person name="Gottschalk G."/>
            <person name="Schmitz R.A."/>
            <person name="Broughton W.J."/>
            <person name="Perret X."/>
            <person name="Strittmatter A.W."/>
            <person name="Streit W.R."/>
        </authorList>
    </citation>
    <scope>NUCLEOTIDE SEQUENCE [LARGE SCALE GENOMIC DNA]</scope>
    <source>
        <strain>NBRC 101917 / NGR234</strain>
    </source>
</reference>
<name>Y4BI_SINFN</name>
<sequence length="138" mass="15311">MNSTFTSQPLLNRSEPRVFKEFYRLVIGCNPAWQVMAQVSLGEILRSKDADAYSCINAKRVDLLLVDGNCRPRHVVEYQRGAHHQGAAAARDAVKKAALRCAGIGYYEVVAGQTTPSDLRRLVEKLVEKPELPICAPD</sequence>
<dbReference type="EMBL" id="U00090">
    <property type="protein sequence ID" value="AAB91624.1"/>
    <property type="molecule type" value="Genomic_DNA"/>
</dbReference>
<dbReference type="RefSeq" id="NP_443786.1">
    <property type="nucleotide sequence ID" value="NC_000914.2"/>
</dbReference>
<dbReference type="KEGG" id="rhi:NGR_a00210"/>
<dbReference type="eggNOG" id="ENOG5032UT1">
    <property type="taxonomic scope" value="Bacteria"/>
</dbReference>
<dbReference type="HOGENOM" id="CLU_1853619_0_0_5"/>
<dbReference type="OrthoDB" id="5679025at2"/>
<dbReference type="Proteomes" id="UP000001054">
    <property type="component" value="Plasmid pNGR234a"/>
</dbReference>
<dbReference type="InterPro" id="IPR024402">
    <property type="entry name" value="DUF2726"/>
</dbReference>
<dbReference type="Pfam" id="PF10881">
    <property type="entry name" value="DUF2726"/>
    <property type="match status" value="1"/>
</dbReference>
<protein>
    <recommendedName>
        <fullName>Uncharacterized protein y4bI</fullName>
    </recommendedName>
</protein>
<geneLocation type="plasmid">
    <name>sym pNGR234a</name>
</geneLocation>